<gene>
    <name evidence="1" type="primary">ackA</name>
    <name type="ordered locus">YPN_2158</name>
    <name type="ORF">YP516_2412</name>
</gene>
<dbReference type="EC" id="2.7.2.1" evidence="1"/>
<dbReference type="EMBL" id="CP000305">
    <property type="protein sequence ID" value="ABG18487.1"/>
    <property type="molecule type" value="Genomic_DNA"/>
</dbReference>
<dbReference type="EMBL" id="ACNQ01000013">
    <property type="protein sequence ID" value="EEO76215.1"/>
    <property type="molecule type" value="Genomic_DNA"/>
</dbReference>
<dbReference type="RefSeq" id="WP_002210288.1">
    <property type="nucleotide sequence ID" value="NZ_ACNQ01000013.1"/>
</dbReference>
<dbReference type="SMR" id="Q1CHP3"/>
<dbReference type="GeneID" id="57976126"/>
<dbReference type="KEGG" id="ypn:YPN_2158"/>
<dbReference type="HOGENOM" id="CLU_020352_0_0_6"/>
<dbReference type="UniPathway" id="UPA00340">
    <property type="reaction ID" value="UER00458"/>
</dbReference>
<dbReference type="Proteomes" id="UP000008936">
    <property type="component" value="Chromosome"/>
</dbReference>
<dbReference type="GO" id="GO:0005829">
    <property type="term" value="C:cytosol"/>
    <property type="evidence" value="ECO:0007669"/>
    <property type="project" value="TreeGrafter"/>
</dbReference>
<dbReference type="GO" id="GO:0008776">
    <property type="term" value="F:acetate kinase activity"/>
    <property type="evidence" value="ECO:0007669"/>
    <property type="project" value="UniProtKB-UniRule"/>
</dbReference>
<dbReference type="GO" id="GO:0005524">
    <property type="term" value="F:ATP binding"/>
    <property type="evidence" value="ECO:0007669"/>
    <property type="project" value="UniProtKB-KW"/>
</dbReference>
<dbReference type="GO" id="GO:0000287">
    <property type="term" value="F:magnesium ion binding"/>
    <property type="evidence" value="ECO:0007669"/>
    <property type="project" value="UniProtKB-UniRule"/>
</dbReference>
<dbReference type="GO" id="GO:0006083">
    <property type="term" value="P:acetate metabolic process"/>
    <property type="evidence" value="ECO:0007669"/>
    <property type="project" value="TreeGrafter"/>
</dbReference>
<dbReference type="GO" id="GO:0006085">
    <property type="term" value="P:acetyl-CoA biosynthetic process"/>
    <property type="evidence" value="ECO:0007669"/>
    <property type="project" value="UniProtKB-UniRule"/>
</dbReference>
<dbReference type="CDD" id="cd24010">
    <property type="entry name" value="ASKHA_NBD_AcK_PK"/>
    <property type="match status" value="1"/>
</dbReference>
<dbReference type="FunFam" id="3.30.420.40:FF:000041">
    <property type="entry name" value="Acetate kinase"/>
    <property type="match status" value="1"/>
</dbReference>
<dbReference type="FunFam" id="3.30.420.40:FF:000042">
    <property type="entry name" value="Acetate kinase"/>
    <property type="match status" value="1"/>
</dbReference>
<dbReference type="Gene3D" id="3.30.420.40">
    <property type="match status" value="2"/>
</dbReference>
<dbReference type="HAMAP" id="MF_00020">
    <property type="entry name" value="Acetate_kinase"/>
    <property type="match status" value="1"/>
</dbReference>
<dbReference type="InterPro" id="IPR004372">
    <property type="entry name" value="Ac/propionate_kinase"/>
</dbReference>
<dbReference type="InterPro" id="IPR000890">
    <property type="entry name" value="Aliphatic_acid_kin_short-chain"/>
</dbReference>
<dbReference type="InterPro" id="IPR023865">
    <property type="entry name" value="Aliphatic_acid_kinase_CS"/>
</dbReference>
<dbReference type="InterPro" id="IPR043129">
    <property type="entry name" value="ATPase_NBD"/>
</dbReference>
<dbReference type="NCBIfam" id="TIGR00016">
    <property type="entry name" value="ackA"/>
    <property type="match status" value="1"/>
</dbReference>
<dbReference type="PANTHER" id="PTHR21060">
    <property type="entry name" value="ACETATE KINASE"/>
    <property type="match status" value="1"/>
</dbReference>
<dbReference type="PANTHER" id="PTHR21060:SF21">
    <property type="entry name" value="ACETATE KINASE"/>
    <property type="match status" value="1"/>
</dbReference>
<dbReference type="Pfam" id="PF00871">
    <property type="entry name" value="Acetate_kinase"/>
    <property type="match status" value="1"/>
</dbReference>
<dbReference type="PIRSF" id="PIRSF000722">
    <property type="entry name" value="Acetate_prop_kin"/>
    <property type="match status" value="1"/>
</dbReference>
<dbReference type="PRINTS" id="PR00471">
    <property type="entry name" value="ACETATEKNASE"/>
</dbReference>
<dbReference type="SUPFAM" id="SSF53067">
    <property type="entry name" value="Actin-like ATPase domain"/>
    <property type="match status" value="2"/>
</dbReference>
<dbReference type="PROSITE" id="PS01075">
    <property type="entry name" value="ACETATE_KINASE_1"/>
    <property type="match status" value="1"/>
</dbReference>
<dbReference type="PROSITE" id="PS01076">
    <property type="entry name" value="ACETATE_KINASE_2"/>
    <property type="match status" value="1"/>
</dbReference>
<keyword id="KW-0067">ATP-binding</keyword>
<keyword id="KW-0963">Cytoplasm</keyword>
<keyword id="KW-0418">Kinase</keyword>
<keyword id="KW-0460">Magnesium</keyword>
<keyword id="KW-0479">Metal-binding</keyword>
<keyword id="KW-0547">Nucleotide-binding</keyword>
<keyword id="KW-0808">Transferase</keyword>
<evidence type="ECO:0000255" key="1">
    <source>
        <dbReference type="HAMAP-Rule" id="MF_00020"/>
    </source>
</evidence>
<organism>
    <name type="scientific">Yersinia pestis bv. Antiqua (strain Nepal516)</name>
    <dbReference type="NCBI Taxonomy" id="377628"/>
    <lineage>
        <taxon>Bacteria</taxon>
        <taxon>Pseudomonadati</taxon>
        <taxon>Pseudomonadota</taxon>
        <taxon>Gammaproteobacteria</taxon>
        <taxon>Enterobacterales</taxon>
        <taxon>Yersiniaceae</taxon>
        <taxon>Yersinia</taxon>
    </lineage>
</organism>
<feature type="chain" id="PRO_1000002286" description="Acetate kinase">
    <location>
        <begin position="1"/>
        <end position="400"/>
    </location>
</feature>
<feature type="active site" description="Proton donor/acceptor" evidence="1">
    <location>
        <position position="150"/>
    </location>
</feature>
<feature type="binding site" evidence="1">
    <location>
        <position position="10"/>
    </location>
    <ligand>
        <name>Mg(2+)</name>
        <dbReference type="ChEBI" id="CHEBI:18420"/>
    </ligand>
</feature>
<feature type="binding site" evidence="1">
    <location>
        <position position="17"/>
    </location>
    <ligand>
        <name>ATP</name>
        <dbReference type="ChEBI" id="CHEBI:30616"/>
    </ligand>
</feature>
<feature type="binding site" evidence="1">
    <location>
        <position position="91"/>
    </location>
    <ligand>
        <name>substrate</name>
    </ligand>
</feature>
<feature type="binding site" evidence="1">
    <location>
        <begin position="210"/>
        <end position="214"/>
    </location>
    <ligand>
        <name>ATP</name>
        <dbReference type="ChEBI" id="CHEBI:30616"/>
    </ligand>
</feature>
<feature type="binding site" evidence="1">
    <location>
        <begin position="285"/>
        <end position="287"/>
    </location>
    <ligand>
        <name>ATP</name>
        <dbReference type="ChEBI" id="CHEBI:30616"/>
    </ligand>
</feature>
<feature type="binding site" evidence="1">
    <location>
        <begin position="333"/>
        <end position="337"/>
    </location>
    <ligand>
        <name>ATP</name>
        <dbReference type="ChEBI" id="CHEBI:30616"/>
    </ligand>
</feature>
<feature type="binding site" evidence="1">
    <location>
        <position position="387"/>
    </location>
    <ligand>
        <name>Mg(2+)</name>
        <dbReference type="ChEBI" id="CHEBI:18420"/>
    </ligand>
</feature>
<feature type="site" description="Transition state stabilizer" evidence="1">
    <location>
        <position position="182"/>
    </location>
</feature>
<feature type="site" description="Transition state stabilizer" evidence="1">
    <location>
        <position position="243"/>
    </location>
</feature>
<proteinExistence type="inferred from homology"/>
<protein>
    <recommendedName>
        <fullName evidence="1">Acetate kinase</fullName>
        <ecNumber evidence="1">2.7.2.1</ecNumber>
    </recommendedName>
    <alternativeName>
        <fullName evidence="1">Acetokinase</fullName>
    </alternativeName>
</protein>
<accession>Q1CHP3</accession>
<accession>C4GV87</accession>
<reference key="1">
    <citation type="journal article" date="2006" name="J. Bacteriol.">
        <title>Complete genome sequence of Yersinia pestis strains Antiqua and Nepal516: evidence of gene reduction in an emerging pathogen.</title>
        <authorList>
            <person name="Chain P.S.G."/>
            <person name="Hu P."/>
            <person name="Malfatti S.A."/>
            <person name="Radnedge L."/>
            <person name="Larimer F."/>
            <person name="Vergez L.M."/>
            <person name="Worsham P."/>
            <person name="Chu M.C."/>
            <person name="Andersen G.L."/>
        </authorList>
    </citation>
    <scope>NUCLEOTIDE SEQUENCE [LARGE SCALE GENOMIC DNA]</scope>
    <source>
        <strain>Nepal516</strain>
    </source>
</reference>
<reference key="2">
    <citation type="submission" date="2009-04" db="EMBL/GenBank/DDBJ databases">
        <title>Yersinia pestis Nepal516A whole genome shotgun sequencing project.</title>
        <authorList>
            <person name="Plunkett G. III"/>
            <person name="Anderson B.D."/>
            <person name="Baumler D.J."/>
            <person name="Burland V."/>
            <person name="Cabot E.L."/>
            <person name="Glasner J.D."/>
            <person name="Mau B."/>
            <person name="Neeno-Eckwall E."/>
            <person name="Perna N.T."/>
            <person name="Munk A.C."/>
            <person name="Tapia R."/>
            <person name="Green L.D."/>
            <person name="Rogers Y.C."/>
            <person name="Detter J.C."/>
            <person name="Bruce D.C."/>
            <person name="Brettin T.S."/>
        </authorList>
    </citation>
    <scope>NUCLEOTIDE SEQUENCE [LARGE SCALE GENOMIC DNA]</scope>
    <source>
        <strain>Nepal516</strain>
    </source>
</reference>
<sequence>MSSKLVLVLNCGSSSLKFAIIDATNGEEHISGLAECFHLPEARIKWKVDGGKQEAALGAGAAHSEALNFIVNTILAQKPALSAQLTAIGHRIVHGGEKFTSSVIVTEDVIQGIKDSIPFAPLHNPAHLIGIAEALKSFPNLADKNVAVFDTAFHQTMPEESYLYALPYSLYKDHGIRRYGAHGTSHFYVSQEAAKILNKPLEELNVITCHLGNGGSVTAVRNGKCVDTSMGLTPLEGLVMGTRSGDLDPAIIFHLHDAMGMSVDQINTLLTKESGLLGLTEVTSDCRYVEDNYATKADAKRAMDVFCHRLAKYIGSYTALMDGRLDAVVFTGGIGENAAMVRELTLDKLGLLGFEIDHERNMAARFGKSGTITKDSSRLALVIPTNEELVIAQDAARLTA</sequence>
<comment type="function">
    <text evidence="1">Catalyzes the formation of acetyl phosphate from acetate and ATP. Can also catalyze the reverse reaction.</text>
</comment>
<comment type="catalytic activity">
    <reaction evidence="1">
        <text>acetate + ATP = acetyl phosphate + ADP</text>
        <dbReference type="Rhea" id="RHEA:11352"/>
        <dbReference type="ChEBI" id="CHEBI:22191"/>
        <dbReference type="ChEBI" id="CHEBI:30089"/>
        <dbReference type="ChEBI" id="CHEBI:30616"/>
        <dbReference type="ChEBI" id="CHEBI:456216"/>
        <dbReference type="EC" id="2.7.2.1"/>
    </reaction>
</comment>
<comment type="cofactor">
    <cofactor evidence="1">
        <name>Mg(2+)</name>
        <dbReference type="ChEBI" id="CHEBI:18420"/>
    </cofactor>
    <cofactor evidence="1">
        <name>Mn(2+)</name>
        <dbReference type="ChEBI" id="CHEBI:29035"/>
    </cofactor>
    <text evidence="1">Mg(2+). Can also accept Mn(2+).</text>
</comment>
<comment type="pathway">
    <text evidence="1">Metabolic intermediate biosynthesis; acetyl-CoA biosynthesis; acetyl-CoA from acetate: step 1/2.</text>
</comment>
<comment type="subunit">
    <text evidence="1">Homodimer.</text>
</comment>
<comment type="subcellular location">
    <subcellularLocation>
        <location evidence="1">Cytoplasm</location>
    </subcellularLocation>
</comment>
<comment type="similarity">
    <text evidence="1">Belongs to the acetokinase family.</text>
</comment>
<name>ACKA_YERPN</name>